<protein>
    <recommendedName>
        <fullName>Autophagy-related protein 14</fullName>
    </recommendedName>
</protein>
<feature type="chain" id="PRO_0000212450" description="Autophagy-related protein 14">
    <location>
        <begin position="1"/>
        <end position="308"/>
    </location>
</feature>
<feature type="region of interest" description="Cysteine repeats" evidence="1">
    <location>
        <begin position="3"/>
        <end position="18"/>
    </location>
</feature>
<feature type="coiled-coil region" evidence="2">
    <location>
        <begin position="73"/>
        <end position="109"/>
    </location>
</feature>
<comment type="function">
    <text evidence="1">Required for cytoplasm to vacuole transport (Cvt) and autophagy as a part of the autophagy-specific VPS34 PI3-kinase complex I. This complex is essential to recruit the ATG8-phosphatidylinositol conjugate and the ATG12-ATG5 conjugate to the pre-autophagosomal structure. ATG14 mediates the specific binding of the VPS34 PI3-kinase complex I to the preautophagosomal structure (PAS) (By similarity).</text>
</comment>
<comment type="subcellular location">
    <subcellularLocation>
        <location evidence="1">Preautophagosomal structure membrane</location>
        <topology evidence="1">Peripheral membrane protein</topology>
    </subcellularLocation>
    <subcellularLocation>
        <location evidence="1">Vacuole membrane</location>
        <topology evidence="1">Peripheral membrane protein</topology>
    </subcellularLocation>
</comment>
<comment type="domain">
    <text evidence="1">Coiled-Coils at the N-terminal half are essential for autophagy.</text>
</comment>
<comment type="similarity">
    <text evidence="3">Belongs to the ATG14 family.</text>
</comment>
<gene>
    <name type="primary">ATG14</name>
    <name type="ordered locus">ADL381W</name>
</gene>
<organism>
    <name type="scientific">Eremothecium gossypii (strain ATCC 10895 / CBS 109.51 / FGSC 9923 / NRRL Y-1056)</name>
    <name type="common">Yeast</name>
    <name type="synonym">Ashbya gossypii</name>
    <dbReference type="NCBI Taxonomy" id="284811"/>
    <lineage>
        <taxon>Eukaryota</taxon>
        <taxon>Fungi</taxon>
        <taxon>Dikarya</taxon>
        <taxon>Ascomycota</taxon>
        <taxon>Saccharomycotina</taxon>
        <taxon>Saccharomycetes</taxon>
        <taxon>Saccharomycetales</taxon>
        <taxon>Saccharomycetaceae</taxon>
        <taxon>Eremothecium</taxon>
    </lineage>
</organism>
<sequence>MQCTICHRPSTVWYCAHCVNTSPKLILRYKLELTQICEEVTEMRDIVTSTLENAISEKEGLLGKHMERLQHLRLKRYNARLSHRARELEQHLDSKLSRRDGLRRALKQLSPDVAVVPAEDPDEYRELRHKLTLLQNVVSMKSTQKFEELCQWFVFTCSTTEDDHFPYSIRFIPVCNIRNWRLLSTAQESLQHMCEFVIYASRALLVDIPFGSHSEKLTTDHIAAVSHFTVNLLTILIKRKRLQERPDVPDLLGRYDIDGLLYLLCSGGDVESITGTCPPTYKVVHEFVRTALEDGDQSEERGHWMVLE</sequence>
<proteinExistence type="inferred from homology"/>
<reference key="1">
    <citation type="journal article" date="2004" name="Science">
        <title>The Ashbya gossypii genome as a tool for mapping the ancient Saccharomyces cerevisiae genome.</title>
        <authorList>
            <person name="Dietrich F.S."/>
            <person name="Voegeli S."/>
            <person name="Brachat S."/>
            <person name="Lerch A."/>
            <person name="Gates K."/>
            <person name="Steiner S."/>
            <person name="Mohr C."/>
            <person name="Poehlmann R."/>
            <person name="Luedi P."/>
            <person name="Choi S."/>
            <person name="Wing R.A."/>
            <person name="Flavier A."/>
            <person name="Gaffney T.D."/>
            <person name="Philippsen P."/>
        </authorList>
    </citation>
    <scope>NUCLEOTIDE SEQUENCE [LARGE SCALE GENOMIC DNA]</scope>
    <source>
        <strain>ATCC 10895 / CBS 109.51 / FGSC 9923 / NRRL Y-1056</strain>
    </source>
</reference>
<reference key="2">
    <citation type="journal article" date="2013" name="G3 (Bethesda)">
        <title>Genomes of Ashbya fungi isolated from insects reveal four mating-type loci, numerous translocations, lack of transposons, and distinct gene duplications.</title>
        <authorList>
            <person name="Dietrich F.S."/>
            <person name="Voegeli S."/>
            <person name="Kuo S."/>
            <person name="Philippsen P."/>
        </authorList>
    </citation>
    <scope>GENOME REANNOTATION</scope>
    <source>
        <strain>ATCC 10895 / CBS 109.51 / FGSC 9923 / NRRL Y-1056</strain>
    </source>
</reference>
<dbReference type="EMBL" id="AE016817">
    <property type="protein sequence ID" value="AAS51539.1"/>
    <property type="molecule type" value="Genomic_DNA"/>
</dbReference>
<dbReference type="RefSeq" id="NP_983715.1">
    <property type="nucleotide sequence ID" value="NM_209068.1"/>
</dbReference>
<dbReference type="SMR" id="Q75BE5"/>
<dbReference type="FunCoup" id="Q75BE5">
    <property type="interactions" value="70"/>
</dbReference>
<dbReference type="STRING" id="284811.Q75BE5"/>
<dbReference type="EnsemblFungi" id="AAS51539">
    <property type="protein sequence ID" value="AAS51539"/>
    <property type="gene ID" value="AGOS_ADL381W"/>
</dbReference>
<dbReference type="GeneID" id="4619850"/>
<dbReference type="KEGG" id="ago:AGOS_ADL381W"/>
<dbReference type="eggNOG" id="ENOG502RY86">
    <property type="taxonomic scope" value="Eukaryota"/>
</dbReference>
<dbReference type="HOGENOM" id="CLU_069448_0_0_1"/>
<dbReference type="InParanoid" id="Q75BE5"/>
<dbReference type="OMA" id="MYCSHCI"/>
<dbReference type="OrthoDB" id="4068791at2759"/>
<dbReference type="Proteomes" id="UP000000591">
    <property type="component" value="Chromosome IV"/>
</dbReference>
<dbReference type="GO" id="GO:0034045">
    <property type="term" value="C:phagophore assembly site membrane"/>
    <property type="evidence" value="ECO:0007669"/>
    <property type="project" value="UniProtKB-SubCell"/>
</dbReference>
<dbReference type="GO" id="GO:0005774">
    <property type="term" value="C:vacuolar membrane"/>
    <property type="evidence" value="ECO:0007669"/>
    <property type="project" value="UniProtKB-SubCell"/>
</dbReference>
<dbReference type="GO" id="GO:0016236">
    <property type="term" value="P:macroautophagy"/>
    <property type="evidence" value="ECO:0007669"/>
    <property type="project" value="InterPro"/>
</dbReference>
<dbReference type="GO" id="GO:0015031">
    <property type="term" value="P:protein transport"/>
    <property type="evidence" value="ECO:0007669"/>
    <property type="project" value="UniProtKB-KW"/>
</dbReference>
<dbReference type="InterPro" id="IPR023261">
    <property type="entry name" value="Autophagy-related_protein_14"/>
</dbReference>
<dbReference type="PRINTS" id="PR02030">
    <property type="entry name" value="AUTOPHGYRP14"/>
</dbReference>
<name>ATG14_EREGS</name>
<evidence type="ECO:0000250" key="1"/>
<evidence type="ECO:0000255" key="2"/>
<evidence type="ECO:0000305" key="3"/>
<accession>Q75BE5</accession>
<keyword id="KW-0072">Autophagy</keyword>
<keyword id="KW-0175">Coiled coil</keyword>
<keyword id="KW-0472">Membrane</keyword>
<keyword id="KW-0653">Protein transport</keyword>
<keyword id="KW-1185">Reference proteome</keyword>
<keyword id="KW-0813">Transport</keyword>
<keyword id="KW-0926">Vacuole</keyword>